<organism>
    <name type="scientific">Petrotoga mobilis (strain DSM 10674 / SJ95)</name>
    <dbReference type="NCBI Taxonomy" id="403833"/>
    <lineage>
        <taxon>Bacteria</taxon>
        <taxon>Thermotogati</taxon>
        <taxon>Thermotogota</taxon>
        <taxon>Thermotogae</taxon>
        <taxon>Petrotogales</taxon>
        <taxon>Petrotogaceae</taxon>
        <taxon>Petrotoga</taxon>
    </lineage>
</organism>
<comment type="function">
    <text evidence="1">Single strand-specific metallo-endoribonuclease involved in late-stage 70S ribosome quality control and in maturation of the 3' terminus of the 16S rRNA.</text>
</comment>
<comment type="cofactor">
    <cofactor evidence="1">
        <name>Zn(2+)</name>
        <dbReference type="ChEBI" id="CHEBI:29105"/>
    </cofactor>
    <text evidence="1">Binds 1 zinc ion.</text>
</comment>
<comment type="subcellular location">
    <subcellularLocation>
        <location evidence="1">Cytoplasm</location>
    </subcellularLocation>
</comment>
<comment type="similarity">
    <text evidence="1">Belongs to the endoribonuclease YbeY family.</text>
</comment>
<name>YBEY_PETMO</name>
<protein>
    <recommendedName>
        <fullName evidence="1">Endoribonuclease YbeY</fullName>
        <ecNumber evidence="1">3.1.-.-</ecNumber>
    </recommendedName>
</protein>
<proteinExistence type="inferred from homology"/>
<reference key="1">
    <citation type="submission" date="2007-11" db="EMBL/GenBank/DDBJ databases">
        <title>Complete sequence of Petroga mobilis SJ95.</title>
        <authorList>
            <consortium name="US DOE Joint Genome Institute"/>
            <person name="Copeland A."/>
            <person name="Lucas S."/>
            <person name="Lapidus A."/>
            <person name="Barry K."/>
            <person name="Glavina del Rio T."/>
            <person name="Dalin E."/>
            <person name="Tice H."/>
            <person name="Pitluck S."/>
            <person name="Meincke L."/>
            <person name="Brettin T."/>
            <person name="Bruce D."/>
            <person name="Detter J.C."/>
            <person name="Han C."/>
            <person name="Kuske C.R."/>
            <person name="Schmutz J."/>
            <person name="Larimer F."/>
            <person name="Land M."/>
            <person name="Hauser L."/>
            <person name="Kyrpides N."/>
            <person name="Mikhailova N."/>
            <person name="Noll K."/>
            <person name="Richardson P."/>
        </authorList>
    </citation>
    <scope>NUCLEOTIDE SEQUENCE [LARGE SCALE GENOMIC DNA]</scope>
    <source>
        <strain>DSM 10674 / SJ95</strain>
    </source>
</reference>
<evidence type="ECO:0000255" key="1">
    <source>
        <dbReference type="HAMAP-Rule" id="MF_00009"/>
    </source>
</evidence>
<accession>A9BHG1</accession>
<sequence length="143" mass="16628">MKINVINQQELREINSKKIKDIAKKVLLNEVGKGNFELNILITDDKSITEFNKYRGKSTPTDVLSFSYGLSEPVIGDIVISVESIEKQAPDFGNSFEEEFYYILIHGLLHIVGYDHENSEEDAKKMFEVQDQYFHQLIKDRRR</sequence>
<gene>
    <name evidence="1" type="primary">ybeY</name>
    <name type="ordered locus">Pmob_0846</name>
</gene>
<dbReference type="EC" id="3.1.-.-" evidence="1"/>
<dbReference type="EMBL" id="CP000879">
    <property type="protein sequence ID" value="ABX31570.1"/>
    <property type="molecule type" value="Genomic_DNA"/>
</dbReference>
<dbReference type="RefSeq" id="WP_012208673.1">
    <property type="nucleotide sequence ID" value="NC_010003.1"/>
</dbReference>
<dbReference type="SMR" id="A9BHG1"/>
<dbReference type="STRING" id="403833.Pmob_0846"/>
<dbReference type="KEGG" id="pmo:Pmob_0846"/>
<dbReference type="eggNOG" id="COG0319">
    <property type="taxonomic scope" value="Bacteria"/>
</dbReference>
<dbReference type="HOGENOM" id="CLU_106710_3_1_0"/>
<dbReference type="OrthoDB" id="9807740at2"/>
<dbReference type="Proteomes" id="UP000000789">
    <property type="component" value="Chromosome"/>
</dbReference>
<dbReference type="GO" id="GO:0005737">
    <property type="term" value="C:cytoplasm"/>
    <property type="evidence" value="ECO:0007669"/>
    <property type="project" value="UniProtKB-SubCell"/>
</dbReference>
<dbReference type="GO" id="GO:0004222">
    <property type="term" value="F:metalloendopeptidase activity"/>
    <property type="evidence" value="ECO:0007669"/>
    <property type="project" value="InterPro"/>
</dbReference>
<dbReference type="GO" id="GO:0004521">
    <property type="term" value="F:RNA endonuclease activity"/>
    <property type="evidence" value="ECO:0007669"/>
    <property type="project" value="UniProtKB-UniRule"/>
</dbReference>
<dbReference type="GO" id="GO:0008270">
    <property type="term" value="F:zinc ion binding"/>
    <property type="evidence" value="ECO:0007669"/>
    <property type="project" value="UniProtKB-UniRule"/>
</dbReference>
<dbReference type="GO" id="GO:0006364">
    <property type="term" value="P:rRNA processing"/>
    <property type="evidence" value="ECO:0007669"/>
    <property type="project" value="UniProtKB-UniRule"/>
</dbReference>
<dbReference type="Gene3D" id="3.40.390.30">
    <property type="entry name" value="Metalloproteases ('zincins'), catalytic domain"/>
    <property type="match status" value="1"/>
</dbReference>
<dbReference type="HAMAP" id="MF_00009">
    <property type="entry name" value="Endoribonucl_YbeY"/>
    <property type="match status" value="1"/>
</dbReference>
<dbReference type="InterPro" id="IPR023091">
    <property type="entry name" value="MetalPrtase_cat_dom_sf_prd"/>
</dbReference>
<dbReference type="InterPro" id="IPR002036">
    <property type="entry name" value="YbeY"/>
</dbReference>
<dbReference type="InterPro" id="IPR020549">
    <property type="entry name" value="YbeY_CS"/>
</dbReference>
<dbReference type="NCBIfam" id="TIGR00043">
    <property type="entry name" value="rRNA maturation RNase YbeY"/>
    <property type="match status" value="1"/>
</dbReference>
<dbReference type="PANTHER" id="PTHR46986">
    <property type="entry name" value="ENDORIBONUCLEASE YBEY, CHLOROPLASTIC"/>
    <property type="match status" value="1"/>
</dbReference>
<dbReference type="PANTHER" id="PTHR46986:SF1">
    <property type="entry name" value="ENDORIBONUCLEASE YBEY, CHLOROPLASTIC"/>
    <property type="match status" value="1"/>
</dbReference>
<dbReference type="Pfam" id="PF02130">
    <property type="entry name" value="YbeY"/>
    <property type="match status" value="1"/>
</dbReference>
<dbReference type="SUPFAM" id="SSF55486">
    <property type="entry name" value="Metalloproteases ('zincins'), catalytic domain"/>
    <property type="match status" value="1"/>
</dbReference>
<dbReference type="PROSITE" id="PS01306">
    <property type="entry name" value="UPF0054"/>
    <property type="match status" value="1"/>
</dbReference>
<keyword id="KW-0963">Cytoplasm</keyword>
<keyword id="KW-0255">Endonuclease</keyword>
<keyword id="KW-0378">Hydrolase</keyword>
<keyword id="KW-0479">Metal-binding</keyword>
<keyword id="KW-0540">Nuclease</keyword>
<keyword id="KW-0690">Ribosome biogenesis</keyword>
<keyword id="KW-0698">rRNA processing</keyword>
<keyword id="KW-0862">Zinc</keyword>
<feature type="chain" id="PRO_0000336013" description="Endoribonuclease YbeY">
    <location>
        <begin position="1"/>
        <end position="143"/>
    </location>
</feature>
<feature type="binding site" evidence="1">
    <location>
        <position position="106"/>
    </location>
    <ligand>
        <name>Zn(2+)</name>
        <dbReference type="ChEBI" id="CHEBI:29105"/>
        <note>catalytic</note>
    </ligand>
</feature>
<feature type="binding site" evidence="1">
    <location>
        <position position="110"/>
    </location>
    <ligand>
        <name>Zn(2+)</name>
        <dbReference type="ChEBI" id="CHEBI:29105"/>
        <note>catalytic</note>
    </ligand>
</feature>
<feature type="binding site" evidence="1">
    <location>
        <position position="116"/>
    </location>
    <ligand>
        <name>Zn(2+)</name>
        <dbReference type="ChEBI" id="CHEBI:29105"/>
        <note>catalytic</note>
    </ligand>
</feature>